<comment type="function">
    <text evidence="1">With S4 and S12 plays an important role in translational accuracy.</text>
</comment>
<comment type="subunit">
    <text evidence="1">Part of the 30S ribosomal subunit. Contacts protein S4.</text>
</comment>
<comment type="domain">
    <text>The N-terminal domain interacts with the head of the 30S subunit; the C-terminal domain interacts with the body and contacts protein S4. The interaction surface between S4 and S5 is involved in control of translational fidelity.</text>
</comment>
<comment type="similarity">
    <text evidence="1">Belongs to the universal ribosomal protein uS5 family.</text>
</comment>
<accession>A6UQ64</accession>
<proteinExistence type="inferred from homology"/>
<keyword id="KW-0687">Ribonucleoprotein</keyword>
<keyword id="KW-0689">Ribosomal protein</keyword>
<keyword id="KW-0694">RNA-binding</keyword>
<keyword id="KW-0699">rRNA-binding</keyword>
<protein>
    <recommendedName>
        <fullName evidence="1">Small ribosomal subunit protein uS5</fullName>
    </recommendedName>
    <alternativeName>
        <fullName evidence="2">30S ribosomal protein S5</fullName>
    </alternativeName>
</protein>
<feature type="chain" id="PRO_0000323234" description="Small ribosomal subunit protein uS5">
    <location>
        <begin position="1"/>
        <end position="225"/>
    </location>
</feature>
<feature type="domain" description="S5 DRBM" evidence="1">
    <location>
        <begin position="57"/>
        <end position="120"/>
    </location>
</feature>
<gene>
    <name evidence="1" type="primary">rps5</name>
    <name type="ordered locus">Mevan_0730</name>
</gene>
<evidence type="ECO:0000255" key="1">
    <source>
        <dbReference type="HAMAP-Rule" id="MF_01307"/>
    </source>
</evidence>
<evidence type="ECO:0000305" key="2"/>
<name>RS5_METVS</name>
<dbReference type="EMBL" id="CP000742">
    <property type="protein sequence ID" value="ABR54636.1"/>
    <property type="molecule type" value="Genomic_DNA"/>
</dbReference>
<dbReference type="RefSeq" id="WP_011972538.1">
    <property type="nucleotide sequence ID" value="NC_009634.1"/>
</dbReference>
<dbReference type="SMR" id="A6UQ64"/>
<dbReference type="STRING" id="406327.Mevan_0730"/>
<dbReference type="GeneID" id="5325893"/>
<dbReference type="KEGG" id="mvn:Mevan_0730"/>
<dbReference type="eggNOG" id="arCOG04087">
    <property type="taxonomic scope" value="Archaea"/>
</dbReference>
<dbReference type="HOGENOM" id="CLU_065898_0_1_2"/>
<dbReference type="OrthoDB" id="38155at2157"/>
<dbReference type="Proteomes" id="UP000001107">
    <property type="component" value="Chromosome"/>
</dbReference>
<dbReference type="GO" id="GO:0022627">
    <property type="term" value="C:cytosolic small ribosomal subunit"/>
    <property type="evidence" value="ECO:0007669"/>
    <property type="project" value="TreeGrafter"/>
</dbReference>
<dbReference type="GO" id="GO:0019843">
    <property type="term" value="F:rRNA binding"/>
    <property type="evidence" value="ECO:0007669"/>
    <property type="project" value="UniProtKB-UniRule"/>
</dbReference>
<dbReference type="GO" id="GO:0003735">
    <property type="term" value="F:structural constituent of ribosome"/>
    <property type="evidence" value="ECO:0007669"/>
    <property type="project" value="InterPro"/>
</dbReference>
<dbReference type="GO" id="GO:0006412">
    <property type="term" value="P:translation"/>
    <property type="evidence" value="ECO:0007669"/>
    <property type="project" value="UniProtKB-UniRule"/>
</dbReference>
<dbReference type="FunFam" id="3.30.160.20:FF:000002">
    <property type="entry name" value="40S ribosomal protein S2"/>
    <property type="match status" value="1"/>
</dbReference>
<dbReference type="FunFam" id="3.30.230.10:FF:000004">
    <property type="entry name" value="40S ribosomal protein S2"/>
    <property type="match status" value="1"/>
</dbReference>
<dbReference type="Gene3D" id="3.30.160.20">
    <property type="match status" value="1"/>
</dbReference>
<dbReference type="Gene3D" id="3.30.230.10">
    <property type="match status" value="1"/>
</dbReference>
<dbReference type="HAMAP" id="MF_01307_A">
    <property type="entry name" value="Ribosomal_uS5_A"/>
    <property type="match status" value="1"/>
</dbReference>
<dbReference type="InterPro" id="IPR020568">
    <property type="entry name" value="Ribosomal_Su5_D2-typ_SF"/>
</dbReference>
<dbReference type="InterPro" id="IPR000851">
    <property type="entry name" value="Ribosomal_uS5"/>
</dbReference>
<dbReference type="InterPro" id="IPR047866">
    <property type="entry name" value="Ribosomal_uS5_arc"/>
</dbReference>
<dbReference type="InterPro" id="IPR005324">
    <property type="entry name" value="Ribosomal_uS5_C"/>
</dbReference>
<dbReference type="InterPro" id="IPR005711">
    <property type="entry name" value="Ribosomal_uS5_euk/arc"/>
</dbReference>
<dbReference type="InterPro" id="IPR013810">
    <property type="entry name" value="Ribosomal_uS5_N"/>
</dbReference>
<dbReference type="InterPro" id="IPR018192">
    <property type="entry name" value="Ribosomal_uS5_N_CS"/>
</dbReference>
<dbReference type="InterPro" id="IPR014721">
    <property type="entry name" value="Ribsml_uS5_D2-typ_fold_subgr"/>
</dbReference>
<dbReference type="NCBIfam" id="NF003125">
    <property type="entry name" value="PRK04044.1"/>
    <property type="match status" value="1"/>
</dbReference>
<dbReference type="NCBIfam" id="TIGR01020">
    <property type="entry name" value="uS5_euk_arch"/>
    <property type="match status" value="1"/>
</dbReference>
<dbReference type="PANTHER" id="PTHR13718:SF4">
    <property type="entry name" value="40S RIBOSOMAL PROTEIN S2"/>
    <property type="match status" value="1"/>
</dbReference>
<dbReference type="PANTHER" id="PTHR13718">
    <property type="entry name" value="RIBOSOMAL S SUBUNIT"/>
    <property type="match status" value="1"/>
</dbReference>
<dbReference type="Pfam" id="PF00333">
    <property type="entry name" value="Ribosomal_S5"/>
    <property type="match status" value="1"/>
</dbReference>
<dbReference type="Pfam" id="PF03719">
    <property type="entry name" value="Ribosomal_S5_C"/>
    <property type="match status" value="1"/>
</dbReference>
<dbReference type="SUPFAM" id="SSF54768">
    <property type="entry name" value="dsRNA-binding domain-like"/>
    <property type="match status" value="1"/>
</dbReference>
<dbReference type="SUPFAM" id="SSF54211">
    <property type="entry name" value="Ribosomal protein S5 domain 2-like"/>
    <property type="match status" value="1"/>
</dbReference>
<dbReference type="PROSITE" id="PS00585">
    <property type="entry name" value="RIBOSOMAL_S5"/>
    <property type="match status" value="1"/>
</dbReference>
<dbReference type="PROSITE" id="PS50881">
    <property type="entry name" value="S5_DSRBD"/>
    <property type="match status" value="1"/>
</dbReference>
<organism>
    <name type="scientific">Methanococcus vannielii (strain ATCC 35089 / DSM 1224 / JCM 13029 / OCM 148 / SB)</name>
    <dbReference type="NCBI Taxonomy" id="406327"/>
    <lineage>
        <taxon>Archaea</taxon>
        <taxon>Methanobacteriati</taxon>
        <taxon>Methanobacteriota</taxon>
        <taxon>Methanomada group</taxon>
        <taxon>Methanococci</taxon>
        <taxon>Methanococcales</taxon>
        <taxon>Methanococcaceae</taxon>
        <taxon>Methanococcus</taxon>
    </lineage>
</organism>
<reference key="1">
    <citation type="submission" date="2007-06" db="EMBL/GenBank/DDBJ databases">
        <title>Complete sequence of Methanococcus vannielii SB.</title>
        <authorList>
            <consortium name="US DOE Joint Genome Institute"/>
            <person name="Copeland A."/>
            <person name="Lucas S."/>
            <person name="Lapidus A."/>
            <person name="Barry K."/>
            <person name="Glavina del Rio T."/>
            <person name="Dalin E."/>
            <person name="Tice H."/>
            <person name="Pitluck S."/>
            <person name="Chain P."/>
            <person name="Malfatti S."/>
            <person name="Shin M."/>
            <person name="Vergez L."/>
            <person name="Schmutz J."/>
            <person name="Larimer F."/>
            <person name="Land M."/>
            <person name="Hauser L."/>
            <person name="Kyrpides N."/>
            <person name="Anderson I."/>
            <person name="Sieprawska-Lupa M."/>
            <person name="Whitman W.B."/>
            <person name="Richardson P."/>
        </authorList>
    </citation>
    <scope>NUCLEOTIDE SEQUENCE [LARGE SCALE GENOMIC DNA]</scope>
    <source>
        <strain>ATCC 35089 / DSM 1224 / JCM 13029 / OCM 148 / SB</strain>
    </source>
</reference>
<sequence length="225" mass="24359">MAEKRAEKRKFNTDSWEPKTQVGRMVKEGTISDISYIMDKGLPLLEPEIVDVLLPDLEEQVLDVKLVQRMHKSGRRARYRATVVVGNKNGYVGVGMGKSKEVGPAIRKAIAQAKLSLIKVRVGCGSWECGCGSPHSIPFTAKGTCGSVKVELLPAPRGVGLVAGNVAKAVLGLAGVKDAWTTTYGDTRTTYNFAEATFDALNNLNFVRCLPEQKAKLGLTEGRVL</sequence>